<gene>
    <name evidence="1" type="primary">murC</name>
    <name type="ordered locus">Oant_1745</name>
</gene>
<accession>A6WZQ7</accession>
<evidence type="ECO:0000255" key="1">
    <source>
        <dbReference type="HAMAP-Rule" id="MF_00046"/>
    </source>
</evidence>
<organism>
    <name type="scientific">Brucella anthropi (strain ATCC 49188 / DSM 6882 / CCUG 24695 / JCM 21032 / LMG 3331 / NBRC 15819 / NCTC 12168 / Alc 37)</name>
    <name type="common">Ochrobactrum anthropi</name>
    <dbReference type="NCBI Taxonomy" id="439375"/>
    <lineage>
        <taxon>Bacteria</taxon>
        <taxon>Pseudomonadati</taxon>
        <taxon>Pseudomonadota</taxon>
        <taxon>Alphaproteobacteria</taxon>
        <taxon>Hyphomicrobiales</taxon>
        <taxon>Brucellaceae</taxon>
        <taxon>Brucella/Ochrobactrum group</taxon>
        <taxon>Brucella</taxon>
    </lineage>
</organism>
<name>MURC_BRUA4</name>
<feature type="chain" id="PRO_1000004381" description="UDP-N-acetylmuramate--L-alanine ligase">
    <location>
        <begin position="1"/>
        <end position="468"/>
    </location>
</feature>
<feature type="binding site" evidence="1">
    <location>
        <begin position="114"/>
        <end position="120"/>
    </location>
    <ligand>
        <name>ATP</name>
        <dbReference type="ChEBI" id="CHEBI:30616"/>
    </ligand>
</feature>
<reference key="1">
    <citation type="journal article" date="2011" name="J. Bacteriol.">
        <title>Genome of Ochrobactrum anthropi ATCC 49188 T, a versatile opportunistic pathogen and symbiont of several eukaryotic hosts.</title>
        <authorList>
            <person name="Chain P.S."/>
            <person name="Lang D.M."/>
            <person name="Comerci D.J."/>
            <person name="Malfatti S.A."/>
            <person name="Vergez L.M."/>
            <person name="Shin M."/>
            <person name="Ugalde R.A."/>
            <person name="Garcia E."/>
            <person name="Tolmasky M.E."/>
        </authorList>
    </citation>
    <scope>NUCLEOTIDE SEQUENCE [LARGE SCALE GENOMIC DNA]</scope>
    <source>
        <strain>ATCC 49188 / DSM 6882 / CCUG 24695 / JCM 21032 / LMG 3331 / NBRC 15819 / NCTC 12168 / Alc 37</strain>
    </source>
</reference>
<protein>
    <recommendedName>
        <fullName evidence="1">UDP-N-acetylmuramate--L-alanine ligase</fullName>
        <ecNumber evidence="1">6.3.2.8</ecNumber>
    </recommendedName>
    <alternativeName>
        <fullName evidence="1">UDP-N-acetylmuramoyl-L-alanine synthetase</fullName>
    </alternativeName>
</protein>
<keyword id="KW-0067">ATP-binding</keyword>
<keyword id="KW-0131">Cell cycle</keyword>
<keyword id="KW-0132">Cell division</keyword>
<keyword id="KW-0133">Cell shape</keyword>
<keyword id="KW-0961">Cell wall biogenesis/degradation</keyword>
<keyword id="KW-0963">Cytoplasm</keyword>
<keyword id="KW-0436">Ligase</keyword>
<keyword id="KW-0547">Nucleotide-binding</keyword>
<keyword id="KW-0573">Peptidoglycan synthesis</keyword>
<keyword id="KW-1185">Reference proteome</keyword>
<proteinExistence type="inferred from homology"/>
<sequence length="468" mass="50578">MKMPLNIGLVHFIGIGGIGMSGIAEVLHNLGYHVQGSDQSDSANVQRLREKGIEVFVGHKAENIGDAEVVVVSTAIKKNNPELVAAREKLLPIVRRAEMLAELMRFRHAVAIGGTHGKTTTTSMVAALLDAGHLDPTVINGGIINAYGTNARMGDGDWMVVEADESDGTFLKLPADIAVVTNIDPEHLDHYGNFENVRAAFAQFVENVPFYGFGVMCLDHPEVQALVSRIEDRRIVTYGQNPQADVRFVNHRMDGAASLFDVVIRSRKGEATEIKDLRLPMPGQHNVSNATAAIAVAHELGISADDIRRGLGSFGGVKRRFTHTGTWNGVEIFDDYGHHPVEIRAVLKAAREATKGRVVAIVQPHRYTRLASLFDEFAACFNDADTVIVTPVYTAGEDPIEGVNSEALVSRIKTAGHRDARYASGPEALAPLVASIAEPGDFVVCLGAGNITQWAYALPKELAEQGKK</sequence>
<dbReference type="EC" id="6.3.2.8" evidence="1"/>
<dbReference type="EMBL" id="CP000758">
    <property type="protein sequence ID" value="ABS14461.1"/>
    <property type="molecule type" value="Genomic_DNA"/>
</dbReference>
<dbReference type="RefSeq" id="WP_012091749.1">
    <property type="nucleotide sequence ID" value="NC_009667.1"/>
</dbReference>
<dbReference type="SMR" id="A6WZQ7"/>
<dbReference type="STRING" id="439375.Oant_1745"/>
<dbReference type="KEGG" id="oan:Oant_1745"/>
<dbReference type="PATRIC" id="fig|439375.7.peg.1846"/>
<dbReference type="eggNOG" id="COG0773">
    <property type="taxonomic scope" value="Bacteria"/>
</dbReference>
<dbReference type="HOGENOM" id="CLU_028104_2_2_5"/>
<dbReference type="PhylomeDB" id="A6WZQ7"/>
<dbReference type="UniPathway" id="UPA00219"/>
<dbReference type="Proteomes" id="UP000002301">
    <property type="component" value="Chromosome 1"/>
</dbReference>
<dbReference type="GO" id="GO:0005737">
    <property type="term" value="C:cytoplasm"/>
    <property type="evidence" value="ECO:0007669"/>
    <property type="project" value="UniProtKB-SubCell"/>
</dbReference>
<dbReference type="GO" id="GO:0005524">
    <property type="term" value="F:ATP binding"/>
    <property type="evidence" value="ECO:0007669"/>
    <property type="project" value="UniProtKB-UniRule"/>
</dbReference>
<dbReference type="GO" id="GO:0008763">
    <property type="term" value="F:UDP-N-acetylmuramate-L-alanine ligase activity"/>
    <property type="evidence" value="ECO:0007669"/>
    <property type="project" value="UniProtKB-UniRule"/>
</dbReference>
<dbReference type="GO" id="GO:0051301">
    <property type="term" value="P:cell division"/>
    <property type="evidence" value="ECO:0007669"/>
    <property type="project" value="UniProtKB-KW"/>
</dbReference>
<dbReference type="GO" id="GO:0071555">
    <property type="term" value="P:cell wall organization"/>
    <property type="evidence" value="ECO:0007669"/>
    <property type="project" value="UniProtKB-KW"/>
</dbReference>
<dbReference type="GO" id="GO:0009252">
    <property type="term" value="P:peptidoglycan biosynthetic process"/>
    <property type="evidence" value="ECO:0007669"/>
    <property type="project" value="UniProtKB-UniRule"/>
</dbReference>
<dbReference type="GO" id="GO:0008360">
    <property type="term" value="P:regulation of cell shape"/>
    <property type="evidence" value="ECO:0007669"/>
    <property type="project" value="UniProtKB-KW"/>
</dbReference>
<dbReference type="Gene3D" id="3.90.190.20">
    <property type="entry name" value="Mur ligase, C-terminal domain"/>
    <property type="match status" value="1"/>
</dbReference>
<dbReference type="Gene3D" id="3.40.1190.10">
    <property type="entry name" value="Mur-like, catalytic domain"/>
    <property type="match status" value="1"/>
</dbReference>
<dbReference type="Gene3D" id="3.40.50.720">
    <property type="entry name" value="NAD(P)-binding Rossmann-like Domain"/>
    <property type="match status" value="1"/>
</dbReference>
<dbReference type="HAMAP" id="MF_00046">
    <property type="entry name" value="MurC"/>
    <property type="match status" value="1"/>
</dbReference>
<dbReference type="InterPro" id="IPR036565">
    <property type="entry name" value="Mur-like_cat_sf"/>
</dbReference>
<dbReference type="InterPro" id="IPR004101">
    <property type="entry name" value="Mur_ligase_C"/>
</dbReference>
<dbReference type="InterPro" id="IPR036615">
    <property type="entry name" value="Mur_ligase_C_dom_sf"/>
</dbReference>
<dbReference type="InterPro" id="IPR013221">
    <property type="entry name" value="Mur_ligase_cen"/>
</dbReference>
<dbReference type="InterPro" id="IPR000713">
    <property type="entry name" value="Mur_ligase_N"/>
</dbReference>
<dbReference type="InterPro" id="IPR050061">
    <property type="entry name" value="MurCDEF_pg_biosynth"/>
</dbReference>
<dbReference type="InterPro" id="IPR005758">
    <property type="entry name" value="UDP-N-AcMur_Ala_ligase_MurC"/>
</dbReference>
<dbReference type="NCBIfam" id="TIGR01082">
    <property type="entry name" value="murC"/>
    <property type="match status" value="1"/>
</dbReference>
<dbReference type="PANTHER" id="PTHR43445:SF3">
    <property type="entry name" value="UDP-N-ACETYLMURAMATE--L-ALANINE LIGASE"/>
    <property type="match status" value="1"/>
</dbReference>
<dbReference type="PANTHER" id="PTHR43445">
    <property type="entry name" value="UDP-N-ACETYLMURAMATE--L-ALANINE LIGASE-RELATED"/>
    <property type="match status" value="1"/>
</dbReference>
<dbReference type="Pfam" id="PF01225">
    <property type="entry name" value="Mur_ligase"/>
    <property type="match status" value="1"/>
</dbReference>
<dbReference type="Pfam" id="PF02875">
    <property type="entry name" value="Mur_ligase_C"/>
    <property type="match status" value="1"/>
</dbReference>
<dbReference type="Pfam" id="PF08245">
    <property type="entry name" value="Mur_ligase_M"/>
    <property type="match status" value="1"/>
</dbReference>
<dbReference type="SUPFAM" id="SSF51984">
    <property type="entry name" value="MurCD N-terminal domain"/>
    <property type="match status" value="1"/>
</dbReference>
<dbReference type="SUPFAM" id="SSF53623">
    <property type="entry name" value="MurD-like peptide ligases, catalytic domain"/>
    <property type="match status" value="1"/>
</dbReference>
<dbReference type="SUPFAM" id="SSF53244">
    <property type="entry name" value="MurD-like peptide ligases, peptide-binding domain"/>
    <property type="match status" value="1"/>
</dbReference>
<comment type="function">
    <text evidence="1">Cell wall formation.</text>
</comment>
<comment type="catalytic activity">
    <reaction evidence="1">
        <text>UDP-N-acetyl-alpha-D-muramate + L-alanine + ATP = UDP-N-acetyl-alpha-D-muramoyl-L-alanine + ADP + phosphate + H(+)</text>
        <dbReference type="Rhea" id="RHEA:23372"/>
        <dbReference type="ChEBI" id="CHEBI:15378"/>
        <dbReference type="ChEBI" id="CHEBI:30616"/>
        <dbReference type="ChEBI" id="CHEBI:43474"/>
        <dbReference type="ChEBI" id="CHEBI:57972"/>
        <dbReference type="ChEBI" id="CHEBI:70757"/>
        <dbReference type="ChEBI" id="CHEBI:83898"/>
        <dbReference type="ChEBI" id="CHEBI:456216"/>
        <dbReference type="EC" id="6.3.2.8"/>
    </reaction>
</comment>
<comment type="pathway">
    <text evidence="1">Cell wall biogenesis; peptidoglycan biosynthesis.</text>
</comment>
<comment type="subcellular location">
    <subcellularLocation>
        <location evidence="1">Cytoplasm</location>
    </subcellularLocation>
</comment>
<comment type="similarity">
    <text evidence="1">Belongs to the MurCDEF family.</text>
</comment>